<evidence type="ECO:0000255" key="1">
    <source>
        <dbReference type="HAMAP-Rule" id="MF_00046"/>
    </source>
</evidence>
<feature type="chain" id="PRO_1000202181" description="UDP-N-acetylmuramate--L-alanine ligase">
    <location>
        <begin position="1"/>
        <end position="461"/>
    </location>
</feature>
<feature type="binding site" evidence="1">
    <location>
        <begin position="112"/>
        <end position="118"/>
    </location>
    <ligand>
        <name>ATP</name>
        <dbReference type="ChEBI" id="CHEBI:30616"/>
    </ligand>
</feature>
<keyword id="KW-0067">ATP-binding</keyword>
<keyword id="KW-0131">Cell cycle</keyword>
<keyword id="KW-0132">Cell division</keyword>
<keyword id="KW-0133">Cell shape</keyword>
<keyword id="KW-0961">Cell wall biogenesis/degradation</keyword>
<keyword id="KW-0963">Cytoplasm</keyword>
<keyword id="KW-0436">Ligase</keyword>
<keyword id="KW-0547">Nucleotide-binding</keyword>
<keyword id="KW-0573">Peptidoglycan synthesis</keyword>
<dbReference type="EC" id="6.3.2.8" evidence="1"/>
<dbReference type="EMBL" id="CP001661">
    <property type="protein sequence ID" value="ACT16589.1"/>
    <property type="molecule type" value="Genomic_DNA"/>
</dbReference>
<dbReference type="SMR" id="C6DZK7"/>
<dbReference type="STRING" id="443144.GM21_0509"/>
<dbReference type="KEGG" id="gem:GM21_0509"/>
<dbReference type="eggNOG" id="COG0773">
    <property type="taxonomic scope" value="Bacteria"/>
</dbReference>
<dbReference type="HOGENOM" id="CLU_028104_2_2_7"/>
<dbReference type="OrthoDB" id="9804126at2"/>
<dbReference type="UniPathway" id="UPA00219"/>
<dbReference type="GO" id="GO:0005737">
    <property type="term" value="C:cytoplasm"/>
    <property type="evidence" value="ECO:0007669"/>
    <property type="project" value="UniProtKB-SubCell"/>
</dbReference>
<dbReference type="GO" id="GO:0005524">
    <property type="term" value="F:ATP binding"/>
    <property type="evidence" value="ECO:0007669"/>
    <property type="project" value="UniProtKB-UniRule"/>
</dbReference>
<dbReference type="GO" id="GO:0008763">
    <property type="term" value="F:UDP-N-acetylmuramate-L-alanine ligase activity"/>
    <property type="evidence" value="ECO:0007669"/>
    <property type="project" value="UniProtKB-UniRule"/>
</dbReference>
<dbReference type="GO" id="GO:0051301">
    <property type="term" value="P:cell division"/>
    <property type="evidence" value="ECO:0007669"/>
    <property type="project" value="UniProtKB-KW"/>
</dbReference>
<dbReference type="GO" id="GO:0071555">
    <property type="term" value="P:cell wall organization"/>
    <property type="evidence" value="ECO:0007669"/>
    <property type="project" value="UniProtKB-KW"/>
</dbReference>
<dbReference type="GO" id="GO:0009252">
    <property type="term" value="P:peptidoglycan biosynthetic process"/>
    <property type="evidence" value="ECO:0007669"/>
    <property type="project" value="UniProtKB-UniRule"/>
</dbReference>
<dbReference type="GO" id="GO:0008360">
    <property type="term" value="P:regulation of cell shape"/>
    <property type="evidence" value="ECO:0007669"/>
    <property type="project" value="UniProtKB-KW"/>
</dbReference>
<dbReference type="Gene3D" id="3.90.190.20">
    <property type="entry name" value="Mur ligase, C-terminal domain"/>
    <property type="match status" value="1"/>
</dbReference>
<dbReference type="Gene3D" id="3.40.1190.10">
    <property type="entry name" value="Mur-like, catalytic domain"/>
    <property type="match status" value="1"/>
</dbReference>
<dbReference type="Gene3D" id="3.40.50.720">
    <property type="entry name" value="NAD(P)-binding Rossmann-like Domain"/>
    <property type="match status" value="1"/>
</dbReference>
<dbReference type="HAMAP" id="MF_00046">
    <property type="entry name" value="MurC"/>
    <property type="match status" value="1"/>
</dbReference>
<dbReference type="InterPro" id="IPR036565">
    <property type="entry name" value="Mur-like_cat_sf"/>
</dbReference>
<dbReference type="InterPro" id="IPR004101">
    <property type="entry name" value="Mur_ligase_C"/>
</dbReference>
<dbReference type="InterPro" id="IPR036615">
    <property type="entry name" value="Mur_ligase_C_dom_sf"/>
</dbReference>
<dbReference type="InterPro" id="IPR013221">
    <property type="entry name" value="Mur_ligase_cen"/>
</dbReference>
<dbReference type="InterPro" id="IPR000713">
    <property type="entry name" value="Mur_ligase_N"/>
</dbReference>
<dbReference type="InterPro" id="IPR050061">
    <property type="entry name" value="MurCDEF_pg_biosynth"/>
</dbReference>
<dbReference type="InterPro" id="IPR005758">
    <property type="entry name" value="UDP-N-AcMur_Ala_ligase_MurC"/>
</dbReference>
<dbReference type="NCBIfam" id="TIGR01082">
    <property type="entry name" value="murC"/>
    <property type="match status" value="1"/>
</dbReference>
<dbReference type="PANTHER" id="PTHR43445:SF3">
    <property type="entry name" value="UDP-N-ACETYLMURAMATE--L-ALANINE LIGASE"/>
    <property type="match status" value="1"/>
</dbReference>
<dbReference type="PANTHER" id="PTHR43445">
    <property type="entry name" value="UDP-N-ACETYLMURAMATE--L-ALANINE LIGASE-RELATED"/>
    <property type="match status" value="1"/>
</dbReference>
<dbReference type="Pfam" id="PF01225">
    <property type="entry name" value="Mur_ligase"/>
    <property type="match status" value="1"/>
</dbReference>
<dbReference type="Pfam" id="PF02875">
    <property type="entry name" value="Mur_ligase_C"/>
    <property type="match status" value="1"/>
</dbReference>
<dbReference type="Pfam" id="PF08245">
    <property type="entry name" value="Mur_ligase_M"/>
    <property type="match status" value="1"/>
</dbReference>
<dbReference type="SUPFAM" id="SSF51984">
    <property type="entry name" value="MurCD N-terminal domain"/>
    <property type="match status" value="1"/>
</dbReference>
<dbReference type="SUPFAM" id="SSF53623">
    <property type="entry name" value="MurD-like peptide ligases, catalytic domain"/>
    <property type="match status" value="1"/>
</dbReference>
<dbReference type="SUPFAM" id="SSF53244">
    <property type="entry name" value="MurD-like peptide ligases, peptide-binding domain"/>
    <property type="match status" value="1"/>
</dbReference>
<reference key="1">
    <citation type="submission" date="2009-07" db="EMBL/GenBank/DDBJ databases">
        <title>Complete sequence of Geobacter sp. M21.</title>
        <authorList>
            <consortium name="US DOE Joint Genome Institute"/>
            <person name="Lucas S."/>
            <person name="Copeland A."/>
            <person name="Lapidus A."/>
            <person name="Glavina del Rio T."/>
            <person name="Dalin E."/>
            <person name="Tice H."/>
            <person name="Bruce D."/>
            <person name="Goodwin L."/>
            <person name="Pitluck S."/>
            <person name="Saunders E."/>
            <person name="Brettin T."/>
            <person name="Detter J.C."/>
            <person name="Han C."/>
            <person name="Larimer F."/>
            <person name="Land M."/>
            <person name="Hauser L."/>
            <person name="Kyrpides N."/>
            <person name="Ovchinnikova G."/>
            <person name="Lovley D."/>
        </authorList>
    </citation>
    <scope>NUCLEOTIDE SEQUENCE [LARGE SCALE GENOMIC DNA]</scope>
    <source>
        <strain>M21</strain>
    </source>
</reference>
<accession>C6DZK7</accession>
<comment type="function">
    <text evidence="1">Cell wall formation.</text>
</comment>
<comment type="catalytic activity">
    <reaction evidence="1">
        <text>UDP-N-acetyl-alpha-D-muramate + L-alanine + ATP = UDP-N-acetyl-alpha-D-muramoyl-L-alanine + ADP + phosphate + H(+)</text>
        <dbReference type="Rhea" id="RHEA:23372"/>
        <dbReference type="ChEBI" id="CHEBI:15378"/>
        <dbReference type="ChEBI" id="CHEBI:30616"/>
        <dbReference type="ChEBI" id="CHEBI:43474"/>
        <dbReference type="ChEBI" id="CHEBI:57972"/>
        <dbReference type="ChEBI" id="CHEBI:70757"/>
        <dbReference type="ChEBI" id="CHEBI:83898"/>
        <dbReference type="ChEBI" id="CHEBI:456216"/>
        <dbReference type="EC" id="6.3.2.8"/>
    </reaction>
</comment>
<comment type="pathway">
    <text evidence="1">Cell wall biogenesis; peptidoglycan biosynthesis.</text>
</comment>
<comment type="subcellular location">
    <subcellularLocation>
        <location evidence="1">Cytoplasm</location>
    </subcellularLocation>
</comment>
<comment type="similarity">
    <text evidence="1">Belongs to the MurCDEF family.</text>
</comment>
<gene>
    <name evidence="1" type="primary">murC</name>
    <name type="ordered locus">GM21_0509</name>
</gene>
<sequence length="461" mass="49775">MYGKIERIHFVGIGGIGMSGIAEVLLNLGYKVSGSDLRGSEITQRLESLGGEIFFGHAAENVANADVVVISSAVHEDNPEVVEAHLRLIPVIPRAEMLAELMRMKYGIAVAGTHGKTTTTSMVATILSKGGIDPTIVIGGRLNSLGTNARLGQGQFLVAEADESDGSFLLLSPTIAVVTNIDADHLDFYSGIEEIKDTFVEFINKIPFYGLAVLCLDNGNVADVLPRVKKRFTSYGLSAQADFRATDVRLSGFSTSFVAHHKGVRLGEITFSMPGAHNVLNALAAIAVAMELDIPFETIQEGFAGFGGVGRRFHLKGEANGIMVVDDYGHHPTEIKATLGAAKAGFAENRLVVVFQPHRYSRTKELFEDFVKAFHDADVLILTDIYPAGEAPIEGVTAEALANRVRRHGQRDVTWISDRDKLCEHLERVLAPGDILLTLGAGNVWQVGETMLLRLKAAKES</sequence>
<proteinExistence type="inferred from homology"/>
<protein>
    <recommendedName>
        <fullName evidence="1">UDP-N-acetylmuramate--L-alanine ligase</fullName>
        <ecNumber evidence="1">6.3.2.8</ecNumber>
    </recommendedName>
    <alternativeName>
        <fullName evidence="1">UDP-N-acetylmuramoyl-L-alanine synthetase</fullName>
    </alternativeName>
</protein>
<name>MURC_GEOSM</name>
<organism>
    <name type="scientific">Geobacter sp. (strain M21)</name>
    <dbReference type="NCBI Taxonomy" id="443144"/>
    <lineage>
        <taxon>Bacteria</taxon>
        <taxon>Pseudomonadati</taxon>
        <taxon>Thermodesulfobacteriota</taxon>
        <taxon>Desulfuromonadia</taxon>
        <taxon>Geobacterales</taxon>
        <taxon>Geobacteraceae</taxon>
        <taxon>Geobacter</taxon>
    </lineage>
</organism>